<keyword id="KW-0158">Chromosome</keyword>
<keyword id="KW-0238">DNA-binding</keyword>
<keyword id="KW-0539">Nucleus</keyword>
<sequence length="221" mass="23288">MSDPAVETAPVAVASPGKAKKEKKPKSDKPKKPKAPRTHPPVSEMVFNAVKTLKERGGSSLQAIKKFLIAQYKVDVDKLDTFIKKYLKSAVEKGQLLQTKGKGALGSFKLPAAAKKEKVVKKTEKKPKKAAAKPSKAGEKKVKKTIAKKPKAATATKIKKPVAKTTKKPAAAKPAAKKAAPKPKAAPKPKAAPKPKKAAAPKAKKPAAKPKAAKKPAAKKA</sequence>
<reference key="1">
    <citation type="submission" date="1994-03" db="EMBL/GenBank/DDBJ databases">
        <title>The two classes of histone H1 proteins of the dipteran genus Camptochironomus are encoded by organizationally divergent genes and differ by a DNA binding motif, KAPKAP.</title>
        <authorList>
            <person name="Schulze E."/>
            <person name="Wisniewski J.R."/>
            <person name="Nagel S."/>
            <person name="Gavenis K."/>
            <person name="Grossbach U."/>
        </authorList>
    </citation>
    <scope>NUCLEOTIDE SEQUENCE [GENOMIC DNA]</scope>
</reference>
<protein>
    <recommendedName>
        <fullName>Histone H1C</fullName>
    </recommendedName>
</protein>
<evidence type="ECO:0000255" key="1">
    <source>
        <dbReference type="PROSITE-ProRule" id="PRU00837"/>
    </source>
</evidence>
<evidence type="ECO:0000256" key="2">
    <source>
        <dbReference type="SAM" id="MobiDB-lite"/>
    </source>
</evidence>
<feature type="chain" id="PRO_0000195969" description="Histone H1C">
    <location>
        <begin position="1"/>
        <end position="221"/>
    </location>
</feature>
<feature type="domain" description="H15" evidence="1">
    <location>
        <begin position="38"/>
        <end position="112"/>
    </location>
</feature>
<feature type="region of interest" description="Disordered" evidence="2">
    <location>
        <begin position="1"/>
        <end position="43"/>
    </location>
</feature>
<feature type="region of interest" description="Disordered" evidence="2">
    <location>
        <begin position="113"/>
        <end position="221"/>
    </location>
</feature>
<feature type="compositionally biased region" description="Basic residues" evidence="2">
    <location>
        <begin position="141"/>
        <end position="167"/>
    </location>
</feature>
<feature type="compositionally biased region" description="Basic residues" evidence="2">
    <location>
        <begin position="175"/>
        <end position="221"/>
    </location>
</feature>
<accession>P40277</accession>
<organism>
    <name type="scientific">Chironomus tentans</name>
    <name type="common">Midge</name>
    <name type="synonym">Camptochironomus tentans</name>
    <dbReference type="NCBI Taxonomy" id="7153"/>
    <lineage>
        <taxon>Eukaryota</taxon>
        <taxon>Metazoa</taxon>
        <taxon>Ecdysozoa</taxon>
        <taxon>Arthropoda</taxon>
        <taxon>Hexapoda</taxon>
        <taxon>Insecta</taxon>
        <taxon>Pterygota</taxon>
        <taxon>Neoptera</taxon>
        <taxon>Endopterygota</taxon>
        <taxon>Diptera</taxon>
        <taxon>Nematocera</taxon>
        <taxon>Chironomoidea</taxon>
        <taxon>Chironomidae</taxon>
        <taxon>Chironominae</taxon>
        <taxon>Chironomus</taxon>
    </lineage>
</organism>
<dbReference type="EMBL" id="L29109">
    <property type="protein sequence ID" value="AAA21717.1"/>
    <property type="molecule type" value="Genomic_DNA"/>
</dbReference>
<dbReference type="SMR" id="P40277"/>
<dbReference type="GO" id="GO:0000786">
    <property type="term" value="C:nucleosome"/>
    <property type="evidence" value="ECO:0007669"/>
    <property type="project" value="InterPro"/>
</dbReference>
<dbReference type="GO" id="GO:0005634">
    <property type="term" value="C:nucleus"/>
    <property type="evidence" value="ECO:0007669"/>
    <property type="project" value="UniProtKB-SubCell"/>
</dbReference>
<dbReference type="GO" id="GO:0003690">
    <property type="term" value="F:double-stranded DNA binding"/>
    <property type="evidence" value="ECO:0007669"/>
    <property type="project" value="TreeGrafter"/>
</dbReference>
<dbReference type="GO" id="GO:0031492">
    <property type="term" value="F:nucleosomal DNA binding"/>
    <property type="evidence" value="ECO:0007669"/>
    <property type="project" value="TreeGrafter"/>
</dbReference>
<dbReference type="GO" id="GO:0030527">
    <property type="term" value="F:structural constituent of chromatin"/>
    <property type="evidence" value="ECO:0007669"/>
    <property type="project" value="InterPro"/>
</dbReference>
<dbReference type="GO" id="GO:0030261">
    <property type="term" value="P:chromosome condensation"/>
    <property type="evidence" value="ECO:0007669"/>
    <property type="project" value="TreeGrafter"/>
</dbReference>
<dbReference type="GO" id="GO:0045910">
    <property type="term" value="P:negative regulation of DNA recombination"/>
    <property type="evidence" value="ECO:0007669"/>
    <property type="project" value="TreeGrafter"/>
</dbReference>
<dbReference type="GO" id="GO:0006334">
    <property type="term" value="P:nucleosome assembly"/>
    <property type="evidence" value="ECO:0007669"/>
    <property type="project" value="InterPro"/>
</dbReference>
<dbReference type="CDD" id="cd00073">
    <property type="entry name" value="H15"/>
    <property type="match status" value="1"/>
</dbReference>
<dbReference type="FunFam" id="1.10.10.10:FF:000140">
    <property type="entry name" value="Histone H1.0"/>
    <property type="match status" value="1"/>
</dbReference>
<dbReference type="Gene3D" id="1.10.10.10">
    <property type="entry name" value="Winged helix-like DNA-binding domain superfamily/Winged helix DNA-binding domain"/>
    <property type="match status" value="1"/>
</dbReference>
<dbReference type="InterPro" id="IPR005819">
    <property type="entry name" value="H1/H5"/>
</dbReference>
<dbReference type="InterPro" id="IPR005818">
    <property type="entry name" value="Histone_H1/H5_H15"/>
</dbReference>
<dbReference type="InterPro" id="IPR036388">
    <property type="entry name" value="WH-like_DNA-bd_sf"/>
</dbReference>
<dbReference type="InterPro" id="IPR036390">
    <property type="entry name" value="WH_DNA-bd_sf"/>
</dbReference>
<dbReference type="PANTHER" id="PTHR11467:SF20">
    <property type="entry name" value="H15 DOMAIN-CONTAINING PROTEIN-RELATED"/>
    <property type="match status" value="1"/>
</dbReference>
<dbReference type="PANTHER" id="PTHR11467">
    <property type="entry name" value="HISTONE H1"/>
    <property type="match status" value="1"/>
</dbReference>
<dbReference type="Pfam" id="PF00538">
    <property type="entry name" value="Linker_histone"/>
    <property type="match status" value="1"/>
</dbReference>
<dbReference type="PRINTS" id="PR00624">
    <property type="entry name" value="HISTONEH5"/>
</dbReference>
<dbReference type="SMART" id="SM00526">
    <property type="entry name" value="H15"/>
    <property type="match status" value="1"/>
</dbReference>
<dbReference type="SUPFAM" id="SSF46785">
    <property type="entry name" value="Winged helix' DNA-binding domain"/>
    <property type="match status" value="1"/>
</dbReference>
<dbReference type="PROSITE" id="PS51504">
    <property type="entry name" value="H15"/>
    <property type="match status" value="1"/>
</dbReference>
<comment type="function">
    <text>Histones H1 are necessary for the condensation of nucleosome chains into higher-order structures.</text>
</comment>
<comment type="subcellular location">
    <subcellularLocation>
        <location>Nucleus</location>
    </subcellularLocation>
    <subcellularLocation>
        <location>Chromosome</location>
    </subcellularLocation>
</comment>
<comment type="similarity">
    <text evidence="1">Belongs to the histone H1/H5 family.</text>
</comment>
<proteinExistence type="inferred from homology"/>
<name>H1C_CHITE</name>